<accession>A5F4Q4</accession>
<accession>C3LYB3</accession>
<feature type="chain" id="PRO_1000072376" description="Phosphoenolpyruvate carboxykinase (ATP)">
    <location>
        <begin position="1"/>
        <end position="542"/>
    </location>
</feature>
<feature type="binding site" evidence="1">
    <location>
        <position position="67"/>
    </location>
    <ligand>
        <name>substrate</name>
    </ligand>
</feature>
<feature type="binding site" evidence="1">
    <location>
        <position position="208"/>
    </location>
    <ligand>
        <name>substrate</name>
    </ligand>
</feature>
<feature type="binding site" evidence="1">
    <location>
        <position position="214"/>
    </location>
    <ligand>
        <name>ATP</name>
        <dbReference type="ChEBI" id="CHEBI:30616"/>
    </ligand>
</feature>
<feature type="binding site" evidence="1">
    <location>
        <position position="214"/>
    </location>
    <ligand>
        <name>Mn(2+)</name>
        <dbReference type="ChEBI" id="CHEBI:29035"/>
    </ligand>
</feature>
<feature type="binding site" evidence="1">
    <location>
        <position position="214"/>
    </location>
    <ligand>
        <name>substrate</name>
    </ligand>
</feature>
<feature type="binding site" evidence="1">
    <location>
        <position position="233"/>
    </location>
    <ligand>
        <name>ATP</name>
        <dbReference type="ChEBI" id="CHEBI:30616"/>
    </ligand>
</feature>
<feature type="binding site" evidence="1">
    <location>
        <position position="233"/>
    </location>
    <ligand>
        <name>Mn(2+)</name>
        <dbReference type="ChEBI" id="CHEBI:29035"/>
    </ligand>
</feature>
<feature type="binding site" evidence="1">
    <location>
        <begin position="249"/>
        <end position="257"/>
    </location>
    <ligand>
        <name>ATP</name>
        <dbReference type="ChEBI" id="CHEBI:30616"/>
    </ligand>
</feature>
<feature type="binding site" evidence="1">
    <location>
        <position position="270"/>
    </location>
    <ligand>
        <name>Mn(2+)</name>
        <dbReference type="ChEBI" id="CHEBI:29035"/>
    </ligand>
</feature>
<feature type="binding site" evidence="1">
    <location>
        <position position="298"/>
    </location>
    <ligand>
        <name>ATP</name>
        <dbReference type="ChEBI" id="CHEBI:30616"/>
    </ligand>
</feature>
<feature type="binding site" evidence="1">
    <location>
        <position position="334"/>
    </location>
    <ligand>
        <name>ATP</name>
        <dbReference type="ChEBI" id="CHEBI:30616"/>
    </ligand>
</feature>
<feature type="binding site" evidence="1">
    <location>
        <position position="334"/>
    </location>
    <ligand>
        <name>substrate</name>
    </ligand>
</feature>
<feature type="binding site" evidence="1">
    <location>
        <begin position="450"/>
        <end position="451"/>
    </location>
    <ligand>
        <name>ATP</name>
        <dbReference type="ChEBI" id="CHEBI:30616"/>
    </ligand>
</feature>
<feature type="binding site" evidence="1">
    <location>
        <position position="456"/>
    </location>
    <ligand>
        <name>ATP</name>
        <dbReference type="ChEBI" id="CHEBI:30616"/>
    </ligand>
</feature>
<evidence type="ECO:0000255" key="1">
    <source>
        <dbReference type="HAMAP-Rule" id="MF_00453"/>
    </source>
</evidence>
<comment type="function">
    <text evidence="1">Involved in the gluconeogenesis. Catalyzes the conversion of oxaloacetate (OAA) to phosphoenolpyruvate (PEP) through direct phosphoryl transfer between the nucleoside triphosphate and OAA.</text>
</comment>
<comment type="catalytic activity">
    <reaction evidence="1">
        <text>oxaloacetate + ATP = phosphoenolpyruvate + ADP + CO2</text>
        <dbReference type="Rhea" id="RHEA:18617"/>
        <dbReference type="ChEBI" id="CHEBI:16452"/>
        <dbReference type="ChEBI" id="CHEBI:16526"/>
        <dbReference type="ChEBI" id="CHEBI:30616"/>
        <dbReference type="ChEBI" id="CHEBI:58702"/>
        <dbReference type="ChEBI" id="CHEBI:456216"/>
        <dbReference type="EC" id="4.1.1.49"/>
    </reaction>
</comment>
<comment type="cofactor">
    <cofactor evidence="1">
        <name>Mn(2+)</name>
        <dbReference type="ChEBI" id="CHEBI:29035"/>
    </cofactor>
    <text evidence="1">Binds 1 Mn(2+) ion per subunit.</text>
</comment>
<comment type="pathway">
    <text evidence="1">Carbohydrate biosynthesis; gluconeogenesis.</text>
</comment>
<comment type="subunit">
    <text evidence="1">Monomer.</text>
</comment>
<comment type="subcellular location">
    <subcellularLocation>
        <location evidence="1">Cytoplasm</location>
    </subcellularLocation>
</comment>
<comment type="similarity">
    <text evidence="1">Belongs to the phosphoenolpyruvate carboxykinase (ATP) family.</text>
</comment>
<organism>
    <name type="scientific">Vibrio cholerae serotype O1 (strain ATCC 39541 / Classical Ogawa 395 / O395)</name>
    <dbReference type="NCBI Taxonomy" id="345073"/>
    <lineage>
        <taxon>Bacteria</taxon>
        <taxon>Pseudomonadati</taxon>
        <taxon>Pseudomonadota</taxon>
        <taxon>Gammaproteobacteria</taxon>
        <taxon>Vibrionales</taxon>
        <taxon>Vibrionaceae</taxon>
        <taxon>Vibrio</taxon>
    </lineage>
</organism>
<protein>
    <recommendedName>
        <fullName evidence="1">Phosphoenolpyruvate carboxykinase (ATP)</fullName>
        <shortName evidence="1">PCK</shortName>
        <shortName evidence="1">PEP carboxykinase</shortName>
        <shortName evidence="1">PEPCK</shortName>
        <ecNumber evidence="1">4.1.1.49</ecNumber>
    </recommendedName>
</protein>
<keyword id="KW-0067">ATP-binding</keyword>
<keyword id="KW-0963">Cytoplasm</keyword>
<keyword id="KW-0210">Decarboxylase</keyword>
<keyword id="KW-0312">Gluconeogenesis</keyword>
<keyword id="KW-0456">Lyase</keyword>
<keyword id="KW-0464">Manganese</keyword>
<keyword id="KW-0479">Metal-binding</keyword>
<keyword id="KW-0547">Nucleotide-binding</keyword>
<dbReference type="EC" id="4.1.1.49" evidence="1"/>
<dbReference type="EMBL" id="CP000627">
    <property type="protein sequence ID" value="ABQ21480.1"/>
    <property type="molecule type" value="Genomic_DNA"/>
</dbReference>
<dbReference type="EMBL" id="CP001235">
    <property type="protein sequence ID" value="ACP10834.1"/>
    <property type="molecule type" value="Genomic_DNA"/>
</dbReference>
<dbReference type="RefSeq" id="WP_000217613.1">
    <property type="nucleotide sequence ID" value="NZ_JAACZH010000007.1"/>
</dbReference>
<dbReference type="SMR" id="A5F4Q4"/>
<dbReference type="GeneID" id="69718668"/>
<dbReference type="KEGG" id="vco:VC0395_A2310"/>
<dbReference type="KEGG" id="vcr:VC395_2850"/>
<dbReference type="PATRIC" id="fig|345073.21.peg.2748"/>
<dbReference type="eggNOG" id="COG1866">
    <property type="taxonomic scope" value="Bacteria"/>
</dbReference>
<dbReference type="HOGENOM" id="CLU_018247_0_1_6"/>
<dbReference type="OrthoDB" id="9806325at2"/>
<dbReference type="UniPathway" id="UPA00138"/>
<dbReference type="Proteomes" id="UP000000249">
    <property type="component" value="Chromosome 2"/>
</dbReference>
<dbReference type="GO" id="GO:0005829">
    <property type="term" value="C:cytosol"/>
    <property type="evidence" value="ECO:0007669"/>
    <property type="project" value="TreeGrafter"/>
</dbReference>
<dbReference type="GO" id="GO:0005524">
    <property type="term" value="F:ATP binding"/>
    <property type="evidence" value="ECO:0007669"/>
    <property type="project" value="UniProtKB-UniRule"/>
</dbReference>
<dbReference type="GO" id="GO:0046872">
    <property type="term" value="F:metal ion binding"/>
    <property type="evidence" value="ECO:0007669"/>
    <property type="project" value="UniProtKB-KW"/>
</dbReference>
<dbReference type="GO" id="GO:0004612">
    <property type="term" value="F:phosphoenolpyruvate carboxykinase (ATP) activity"/>
    <property type="evidence" value="ECO:0007669"/>
    <property type="project" value="UniProtKB-UniRule"/>
</dbReference>
<dbReference type="GO" id="GO:0006094">
    <property type="term" value="P:gluconeogenesis"/>
    <property type="evidence" value="ECO:0007669"/>
    <property type="project" value="UniProtKB-UniRule"/>
</dbReference>
<dbReference type="CDD" id="cd00484">
    <property type="entry name" value="PEPCK_ATP"/>
    <property type="match status" value="1"/>
</dbReference>
<dbReference type="FunFam" id="2.170.8.10:FF:000001">
    <property type="entry name" value="Phosphoenolpyruvate carboxykinase (ATP)"/>
    <property type="match status" value="1"/>
</dbReference>
<dbReference type="FunFam" id="3.40.449.10:FF:000001">
    <property type="entry name" value="Phosphoenolpyruvate carboxykinase (ATP)"/>
    <property type="match status" value="1"/>
</dbReference>
<dbReference type="Gene3D" id="3.90.228.20">
    <property type="match status" value="1"/>
</dbReference>
<dbReference type="Gene3D" id="3.40.449.10">
    <property type="entry name" value="Phosphoenolpyruvate Carboxykinase, domain 1"/>
    <property type="match status" value="1"/>
</dbReference>
<dbReference type="Gene3D" id="2.170.8.10">
    <property type="entry name" value="Phosphoenolpyruvate Carboxykinase, domain 2"/>
    <property type="match status" value="1"/>
</dbReference>
<dbReference type="HAMAP" id="MF_00453">
    <property type="entry name" value="PEPCK_ATP"/>
    <property type="match status" value="1"/>
</dbReference>
<dbReference type="InterPro" id="IPR001272">
    <property type="entry name" value="PEP_carboxykinase_ATP"/>
</dbReference>
<dbReference type="InterPro" id="IPR013035">
    <property type="entry name" value="PEP_carboxykinase_C"/>
</dbReference>
<dbReference type="InterPro" id="IPR008210">
    <property type="entry name" value="PEP_carboxykinase_N"/>
</dbReference>
<dbReference type="InterPro" id="IPR015994">
    <property type="entry name" value="PEPCK_ATP_CS"/>
</dbReference>
<dbReference type="NCBIfam" id="TIGR00224">
    <property type="entry name" value="pckA"/>
    <property type="match status" value="1"/>
</dbReference>
<dbReference type="NCBIfam" id="NF006819">
    <property type="entry name" value="PRK09344.1-1"/>
    <property type="match status" value="1"/>
</dbReference>
<dbReference type="NCBIfam" id="NF006820">
    <property type="entry name" value="PRK09344.1-2"/>
    <property type="match status" value="1"/>
</dbReference>
<dbReference type="NCBIfam" id="NF006821">
    <property type="entry name" value="PRK09344.1-3"/>
    <property type="match status" value="1"/>
</dbReference>
<dbReference type="PANTHER" id="PTHR30031:SF0">
    <property type="entry name" value="PHOSPHOENOLPYRUVATE CARBOXYKINASE (ATP)"/>
    <property type="match status" value="1"/>
</dbReference>
<dbReference type="PANTHER" id="PTHR30031">
    <property type="entry name" value="PHOSPHOENOLPYRUVATE CARBOXYKINASE ATP"/>
    <property type="match status" value="1"/>
</dbReference>
<dbReference type="Pfam" id="PF01293">
    <property type="entry name" value="PEPCK_ATP"/>
    <property type="match status" value="1"/>
</dbReference>
<dbReference type="PIRSF" id="PIRSF006294">
    <property type="entry name" value="PEP_crbxkin"/>
    <property type="match status" value="1"/>
</dbReference>
<dbReference type="SUPFAM" id="SSF68923">
    <property type="entry name" value="PEP carboxykinase N-terminal domain"/>
    <property type="match status" value="1"/>
</dbReference>
<dbReference type="SUPFAM" id="SSF53795">
    <property type="entry name" value="PEP carboxykinase-like"/>
    <property type="match status" value="1"/>
</dbReference>
<dbReference type="PROSITE" id="PS00532">
    <property type="entry name" value="PEPCK_ATP"/>
    <property type="match status" value="1"/>
</dbReference>
<sequence length="542" mass="59844">MTVMEHTKAAQIDLAQYGITGVTELVRNPSYEMLFAEETRSDLEGYERGVVTELGAVAVDTGIFTGRSPKDKFIVKDDTTRDTLWWTSDKAKNDNKPINQEVWNDLKALVTKQLSGKRVFVLDGYCGANADTRLSVRFITEVAWQAHFVKNMFIRPSEEELAHFKPDFVVMNGAKCTNAKWKEHGLNSENFTVFNLTERMQLIGGTWYGGEMKKGMFAMMNYFLPLQGIASMHCSANMGKAGDVAIFFGLSGTGKTTLSTDPKRALIGDDEHGWDDDGVFNFEGGCYAKTIKLSKEAEPDIYNAIRRDALLENVTVRSDGSIDFDDGSKTENTRVSYPIYHIDNIVKPVSKGGHATKVIFLSADAFGVLPPVSKLTPEQTKYHFLSGFTAKLAGTERGITEPTPTFSACFGAAFLTLHPTQYAEVLVKRMEAAGAEAYLVNTGWNGSGKRISIKDTRGIIDAILDGSIEKAETKHIPIFNLQVPTALPGVDPMILDPRDTYVDPLQWESKAKDLATRFINNFDKYTDNAEGKALVAAGPKLD</sequence>
<proteinExistence type="inferred from homology"/>
<gene>
    <name evidence="1" type="primary">pckA</name>
    <name type="ordered locus">VC0395_A2310</name>
    <name type="ordered locus">VC395_2850</name>
</gene>
<reference key="1">
    <citation type="submission" date="2007-03" db="EMBL/GenBank/DDBJ databases">
        <authorList>
            <person name="Heidelberg J."/>
        </authorList>
    </citation>
    <scope>NUCLEOTIDE SEQUENCE [LARGE SCALE GENOMIC DNA]</scope>
    <source>
        <strain>ATCC 39541 / Classical Ogawa 395 / O395</strain>
    </source>
</reference>
<reference key="2">
    <citation type="journal article" date="2008" name="PLoS ONE">
        <title>A recalibrated molecular clock and independent origins for the cholera pandemic clones.</title>
        <authorList>
            <person name="Feng L."/>
            <person name="Reeves P.R."/>
            <person name="Lan R."/>
            <person name="Ren Y."/>
            <person name="Gao C."/>
            <person name="Zhou Z."/>
            <person name="Ren Y."/>
            <person name="Cheng J."/>
            <person name="Wang W."/>
            <person name="Wang J."/>
            <person name="Qian W."/>
            <person name="Li D."/>
            <person name="Wang L."/>
        </authorList>
    </citation>
    <scope>NUCLEOTIDE SEQUENCE [LARGE SCALE GENOMIC DNA]</scope>
    <source>
        <strain>ATCC 39541 / Classical Ogawa 395 / O395</strain>
    </source>
</reference>
<name>PCKA_VIBC3</name>